<evidence type="ECO:0000250" key="1"/>
<evidence type="ECO:0000269" key="2">
    <source>
    </source>
</evidence>
<evidence type="ECO:0000303" key="3">
    <source>
    </source>
</evidence>
<evidence type="ECO:0000305" key="4"/>
<dbReference type="GO" id="GO:0005576">
    <property type="term" value="C:extracellular region"/>
    <property type="evidence" value="ECO:0007669"/>
    <property type="project" value="UniProtKB-SubCell"/>
</dbReference>
<dbReference type="GO" id="GO:0090729">
    <property type="term" value="F:toxin activity"/>
    <property type="evidence" value="ECO:0007669"/>
    <property type="project" value="UniProtKB-KW"/>
</dbReference>
<dbReference type="GO" id="GO:0006952">
    <property type="term" value="P:defense response"/>
    <property type="evidence" value="ECO:0007669"/>
    <property type="project" value="UniProtKB-KW"/>
</dbReference>
<dbReference type="GO" id="GO:0042311">
    <property type="term" value="P:vasodilation"/>
    <property type="evidence" value="ECO:0007669"/>
    <property type="project" value="UniProtKB-KW"/>
</dbReference>
<accession>P86628</accession>
<sequence length="8" mass="904">RPPGFSPF</sequence>
<name>BRK2_PHAJA</name>
<organism>
    <name type="scientific">Phasmahyla jandaia</name>
    <name type="common">Jandaia leaf frog</name>
    <name type="synonym">Phyllomedusa jandaia</name>
    <dbReference type="NCBI Taxonomy" id="762504"/>
    <lineage>
        <taxon>Eukaryota</taxon>
        <taxon>Metazoa</taxon>
        <taxon>Chordata</taxon>
        <taxon>Craniata</taxon>
        <taxon>Vertebrata</taxon>
        <taxon>Euteleostomi</taxon>
        <taxon>Amphibia</taxon>
        <taxon>Batrachia</taxon>
        <taxon>Anura</taxon>
        <taxon>Neobatrachia</taxon>
        <taxon>Hyloidea</taxon>
        <taxon>Hylidae</taxon>
        <taxon>Phyllomedusinae</taxon>
        <taxon>Phasmahyla</taxon>
    </lineage>
</organism>
<reference evidence="4" key="1">
    <citation type="journal article" date="2011" name="Toxicon">
        <title>Peptidomic dissection of the skin secretion of Phasmahyla jandaia (Bokermann and Sazima, 1978) (Anura, Hylidae, Phyllomedusinae).</title>
        <authorList>
            <person name="Rates B."/>
            <person name="Silva L.P."/>
            <person name="Ireno I.C."/>
            <person name="Leite F.S."/>
            <person name="Borges M.H."/>
            <person name="Bloch C. Jr."/>
            <person name="De Lima M.E."/>
            <person name="Pimenta A.M."/>
        </authorList>
    </citation>
    <scope>PROTEIN SEQUENCE</scope>
    <scope>SUBCELLULAR LOCATION</scope>
    <scope>TISSUE SPECIFICITY</scope>
    <scope>MASS SPECTROMETRY</scope>
    <source>
        <tissue evidence="2">Skin secretion</tissue>
    </source>
</reference>
<protein>
    <recommendedName>
        <fullName>Des-Arg9-bradykinin</fullName>
        <shortName evidence="3">Des-Arg-bradykinin</shortName>
    </recommendedName>
</protein>
<feature type="peptide" id="PRO_0000404631" description="Des-Arg9-bradykinin" evidence="2">
    <location>
        <begin position="1"/>
        <end position="8"/>
    </location>
</feature>
<comment type="function">
    <text evidence="1">Produces in vitro relaxation of rat arterial smooth muscle and constriction of intestinal smooth muscle (By similarity). May target bradykinin receptors (BDKRB).</text>
</comment>
<comment type="subcellular location">
    <subcellularLocation>
        <location evidence="2">Secreted</location>
    </subcellularLocation>
</comment>
<comment type="tissue specificity">
    <text evidence="2">Expressed by the skin glands.</text>
</comment>
<comment type="mass spectrometry" mass="903.4" method="MALDI" evidence="2"/>
<comment type="similarity">
    <text evidence="4">Belongs to the bradykinin-related peptide family.</text>
</comment>
<proteinExistence type="evidence at protein level"/>
<keyword id="KW-0878">Amphibian defense peptide</keyword>
<keyword id="KW-0903">Direct protein sequencing</keyword>
<keyword id="KW-1213">G-protein coupled receptor impairing toxin</keyword>
<keyword id="KW-0964">Secreted</keyword>
<keyword id="KW-0800">Toxin</keyword>
<keyword id="KW-0838">Vasoactive</keyword>
<keyword id="KW-0840">Vasodilator</keyword>